<sequence>MADRTAPRCQLRLEWVYGYRGHQCRNNLYYTAGKEVVYFVAGVGVVYNTREHSQKFFLGHNDDIISLALHPDKTLIATGQVGKEPYICIWNSYNVHTVSILKDVHTHGVACLAFDSDGQHLASVGLDAKNTVCIWDWRKGKLLASATGHSDRIFDISWDPYQPNRMVSCGVKHIKFWTLCGNALTAKRGIFGKTGDLQTILCLACAKEDITYSGALNGDIYVWKGLTLVRTIQGAHSAGIFSLYACEEGFATGGRDGCIRLWDTDFKPITKIDLRETEQGYKGLSIRSVCWKADRLLAGTQDSEIFEVIVRERDKPMLILQGHCEGELWALALHPKKPLAVTGSDDRSVRLWSLADHALIARCNMEEAVRSVSFSPDGSQLALGMKDGSFIVLRVRDMTEVVHIKDRKEVIHEMKFSPDGSYLAVGSNDGPVDVYAVAQRYKKIGECNKSLSFITHIDWSLDSKYLQTNDGAGERLFYKMPSGKPLTSKEEIKGIPWASWTCVRGPEVSGIWPKYTEVIDINSVDANYNSSVLVSGDDFGLVKLFKFPCLKKGAKFRKYVGHSAHVTNVRWSHDFQWVLSTGGADHSVFQWRFIPEAVSNGVLETTPQEGGADSYSEESDSDFSDVPELDSDIEQETQINYDRQVYKEDLPQLKQQSKEKNHAVPFLKREKAPEDSLKLQFIHGYRGYDCRNNLFYTQAGEVVYHIAAVAVVYNRQQHAQRLYLGHDDDILSLTIHPVKDYVATGQVGRDAAVHVWDTQTLKCLSLLKGHHQRGVCALDFSADGKCLVSVGLDDFHSVVFWDWKKGEKIATTRGHKDKIFVVKCNPQHADKLVTVGIKHIKFWQQAGGGFTSKRGSFGSAGKLETMMCVSYGRMEDLVFSGAATGDIFIWKDVLLLKTVKAHDGPVFAMYALDKGFVTGGKDGIVELWDDMFERCLKTYAIKRTALSTSSKGLLLEDNPSIRAITLGHGHILVGTKNGEILEIDKSGPMTLLVQGHMEGEVWGLAAHPLLPICATVSDDKTLRIWELSSQHRMLAVRKLKKGGRCCAFSPDGKALAVGLNDGSFLVVNADTVEDMLSFHHRKEMISDIKFSKDTGKYLAVASHDNFVDIYNVLTSKRVGICKGASSYITHIDWDSRGKLLQVNSGAKEQLFFEAPRGRKHTIRPSEAEKIEWDTWTCVLGPTCEGIWPAHSDVTDVNAANLTKDGSLLATGDDFGFVKLFSYPVKGQHARFKKYVGHSAHVTNVRWLHNDSVLLTVGGADTALMIWTREFVGTQESKLVDSEESDTDAEEDGGYDSDVAREKAIDYTTKIYAVSIREMEGTKPHQQLKEVSMEERPPVSRAAPQPEKLQKNNITKKKKLVEELALDHVFGYRGFDCRNNLHYLNDGADIIFHTAAAGIVQNLSTGSQSFYLEHTDDILCLTVNQHPKYRNVVATSQIGTTPSIHIWDAMTKHTLSMLRCFHTKGVNYINFSATGKLLVSVGVDPEHTITVWRWQEGTKVASRGGHLERIFVVEFRPDSDTQFVSVGVKHMKFWTLAGSALLYKKGVIGSMEAAKMQTMLSVAFGANNLTFTGAINGDVYVWKEHFLIRLVAKAHTGPVFTMYTTLRDGLIVTGGKERPTKEGGAVKLWDQEMKRCRAFQLETGQLVECVRSVCRGKGKILVGTKDGEIIEVGEKSAASNILIDGHMEGEIWGLATHPSKDMFISASNDGTARIWDLADKKLLNKVNLGHAARCAAYSPDGEMVAIGMKNGEFVILLVNTLKVWGKKRDRKSAIQDIRISPDNRFLAVGSSEQTVDFYDLTQGTSLNRIGYCKDIPSFVIQMDFSADSKYIQVSTGAYKRQVHEVPLGKQVTEAMVVEKITWASWTSVLGDEVIGIWPRNADKADVNCACVTHAGLNIVTGDDFGLLKLFDFPCTEKFAKHKRYFGHSAHVTNIRFSSDDKYVVSTGGDDCSVFVWRCL</sequence>
<name>EMAL6_MOUSE</name>
<dbReference type="EMBL" id="AL731792">
    <property type="status" value="NOT_ANNOTATED_CDS"/>
    <property type="molecule type" value="Genomic_DNA"/>
</dbReference>
<dbReference type="EMBL" id="AL929371">
    <property type="status" value="NOT_ANNOTATED_CDS"/>
    <property type="molecule type" value="Genomic_DNA"/>
</dbReference>
<dbReference type="EMBL" id="BX005100">
    <property type="status" value="NOT_ANNOTATED_CDS"/>
    <property type="molecule type" value="Genomic_DNA"/>
</dbReference>
<dbReference type="EMBL" id="AK049977">
    <property type="protein sequence ID" value="BAC34015.1"/>
    <property type="molecule type" value="mRNA"/>
</dbReference>
<dbReference type="EMBL" id="AK081418">
    <property type="protein sequence ID" value="BAC38214.1"/>
    <property type="status" value="ALT_INIT"/>
    <property type="molecule type" value="mRNA"/>
</dbReference>
<dbReference type="EMBL" id="BC024726">
    <property type="protein sequence ID" value="AAH24726.1"/>
    <property type="status" value="ALT_INIT"/>
    <property type="molecule type" value="mRNA"/>
</dbReference>
<dbReference type="RefSeq" id="NP_666128.2">
    <property type="nucleotide sequence ID" value="NM_146016.2"/>
</dbReference>
<dbReference type="SMR" id="Q5SQM0"/>
<dbReference type="BioGRID" id="231896">
    <property type="interactions" value="1"/>
</dbReference>
<dbReference type="FunCoup" id="Q5SQM0">
    <property type="interactions" value="586"/>
</dbReference>
<dbReference type="STRING" id="10090.ENSMUSP00000051080"/>
<dbReference type="GlyGen" id="Q5SQM0">
    <property type="glycosylation" value="2 sites, 1 N-linked glycan (1 site)"/>
</dbReference>
<dbReference type="iPTMnet" id="Q5SQM0"/>
<dbReference type="PhosphoSitePlus" id="Q5SQM0"/>
<dbReference type="SwissPalm" id="Q5SQM0"/>
<dbReference type="PaxDb" id="10090-ENSMUSP00000051080"/>
<dbReference type="ProteomicsDB" id="277582"/>
<dbReference type="Antibodypedia" id="74753">
    <property type="antibodies" value="8 antibodies from 4 providers"/>
</dbReference>
<dbReference type="DNASU" id="237711"/>
<dbReference type="Ensembl" id="ENSMUST00000058902.6">
    <property type="protein sequence ID" value="ENSMUSP00000051080.6"/>
    <property type="gene ID" value="ENSMUSG00000044072.15"/>
</dbReference>
<dbReference type="GeneID" id="237711"/>
<dbReference type="KEGG" id="mmu:237711"/>
<dbReference type="UCSC" id="uc007ihq.1">
    <property type="organism name" value="mouse"/>
</dbReference>
<dbReference type="AGR" id="MGI:2442895"/>
<dbReference type="CTD" id="400954"/>
<dbReference type="MGI" id="MGI:2442895">
    <property type="gene designation" value="Eml6"/>
</dbReference>
<dbReference type="VEuPathDB" id="HostDB:ENSMUSG00000044072"/>
<dbReference type="eggNOG" id="KOG2106">
    <property type="taxonomic scope" value="Eukaryota"/>
</dbReference>
<dbReference type="GeneTree" id="ENSGT00940000155564"/>
<dbReference type="HOGENOM" id="CLU_001930_0_0_1"/>
<dbReference type="InParanoid" id="Q5SQM0"/>
<dbReference type="OMA" id="ACAKDDI"/>
<dbReference type="OrthoDB" id="47802at2759"/>
<dbReference type="PhylomeDB" id="Q5SQM0"/>
<dbReference type="TreeFam" id="TF317832"/>
<dbReference type="BioGRID-ORCS" id="237711">
    <property type="hits" value="1 hit in 71 CRISPR screens"/>
</dbReference>
<dbReference type="ChiTaRS" id="Eml6">
    <property type="organism name" value="mouse"/>
</dbReference>
<dbReference type="PRO" id="PR:Q5SQM0"/>
<dbReference type="Proteomes" id="UP000000589">
    <property type="component" value="Chromosome 11"/>
</dbReference>
<dbReference type="RNAct" id="Q5SQM0">
    <property type="molecule type" value="protein"/>
</dbReference>
<dbReference type="Bgee" id="ENSMUSG00000044072">
    <property type="expression patterns" value="Expressed in spermatid and 119 other cell types or tissues"/>
</dbReference>
<dbReference type="ExpressionAtlas" id="Q5SQM0">
    <property type="expression patterns" value="baseline and differential"/>
</dbReference>
<dbReference type="GO" id="GO:0005737">
    <property type="term" value="C:cytoplasm"/>
    <property type="evidence" value="ECO:0007669"/>
    <property type="project" value="UniProtKB-KW"/>
</dbReference>
<dbReference type="GO" id="GO:0005874">
    <property type="term" value="C:microtubule"/>
    <property type="evidence" value="ECO:0007669"/>
    <property type="project" value="UniProtKB-KW"/>
</dbReference>
<dbReference type="FunFam" id="2.130.10.10:FF:000040">
    <property type="entry name" value="echinoderm microtubule-associated protein-like 6 isoform X1"/>
    <property type="match status" value="1"/>
</dbReference>
<dbReference type="FunFam" id="2.130.10.10:FF:000042">
    <property type="entry name" value="echinoderm microtubule-associated protein-like 6 isoform X1"/>
    <property type="match status" value="1"/>
</dbReference>
<dbReference type="FunFam" id="2.130.10.10:FF:000044">
    <property type="entry name" value="echinoderm microtubule-associated protein-like 6 isoform X1"/>
    <property type="match status" value="1"/>
</dbReference>
<dbReference type="FunFam" id="2.130.10.10:FF:000024">
    <property type="entry name" value="Putative echinoderm microtubule-associated protein-like 6"/>
    <property type="match status" value="1"/>
</dbReference>
<dbReference type="FunFam" id="2.130.10.10:FF:000035">
    <property type="entry name" value="Putative echinoderm microtubule-associated protein-like 6"/>
    <property type="match status" value="1"/>
</dbReference>
<dbReference type="FunFam" id="2.130.10.10:FF:000037">
    <property type="entry name" value="Putative echinoderm microtubule-associated protein-like 6"/>
    <property type="match status" value="1"/>
</dbReference>
<dbReference type="Gene3D" id="2.130.10.10">
    <property type="entry name" value="YVTN repeat-like/Quinoprotein amine dehydrogenase"/>
    <property type="match status" value="6"/>
</dbReference>
<dbReference type="InterPro" id="IPR055442">
    <property type="entry name" value="Beta-prop_EML-like_2nd"/>
</dbReference>
<dbReference type="InterPro" id="IPR055439">
    <property type="entry name" value="Beta-prop_EML_1st"/>
</dbReference>
<dbReference type="InterPro" id="IPR005108">
    <property type="entry name" value="HELP"/>
</dbReference>
<dbReference type="InterPro" id="IPR011047">
    <property type="entry name" value="Quinoprotein_ADH-like_sf"/>
</dbReference>
<dbReference type="InterPro" id="IPR015943">
    <property type="entry name" value="WD40/YVTN_repeat-like_dom_sf"/>
</dbReference>
<dbReference type="InterPro" id="IPR036322">
    <property type="entry name" value="WD40_repeat_dom_sf"/>
</dbReference>
<dbReference type="InterPro" id="IPR001680">
    <property type="entry name" value="WD40_rpt"/>
</dbReference>
<dbReference type="InterPro" id="IPR050630">
    <property type="entry name" value="WD_repeat_EMAP"/>
</dbReference>
<dbReference type="PANTHER" id="PTHR13720:SF52">
    <property type="entry name" value="ECHINODERM MICROTUBULE-ASSOCIATED PROTEIN-LIKE 6"/>
    <property type="match status" value="1"/>
</dbReference>
<dbReference type="PANTHER" id="PTHR13720">
    <property type="entry name" value="WD-40 REPEAT PROTEIN"/>
    <property type="match status" value="1"/>
</dbReference>
<dbReference type="Pfam" id="PF23409">
    <property type="entry name" value="Beta-prop_EML"/>
    <property type="match status" value="3"/>
</dbReference>
<dbReference type="Pfam" id="PF23414">
    <property type="entry name" value="Beta-prop_EML_2"/>
    <property type="match status" value="3"/>
</dbReference>
<dbReference type="Pfam" id="PF03451">
    <property type="entry name" value="HELP"/>
    <property type="match status" value="3"/>
</dbReference>
<dbReference type="SMART" id="SM00320">
    <property type="entry name" value="WD40"/>
    <property type="match status" value="30"/>
</dbReference>
<dbReference type="SUPFAM" id="SSF50998">
    <property type="entry name" value="Quinoprotein alcohol dehydrogenase-like"/>
    <property type="match status" value="2"/>
</dbReference>
<dbReference type="SUPFAM" id="SSF50978">
    <property type="entry name" value="WD40 repeat-like"/>
    <property type="match status" value="4"/>
</dbReference>
<dbReference type="PROSITE" id="PS00678">
    <property type="entry name" value="WD_REPEATS_1"/>
    <property type="match status" value="1"/>
</dbReference>
<dbReference type="PROSITE" id="PS50082">
    <property type="entry name" value="WD_REPEATS_2"/>
    <property type="match status" value="7"/>
</dbReference>
<dbReference type="PROSITE" id="PS50294">
    <property type="entry name" value="WD_REPEATS_REGION"/>
    <property type="match status" value="6"/>
</dbReference>
<organism>
    <name type="scientific">Mus musculus</name>
    <name type="common">Mouse</name>
    <dbReference type="NCBI Taxonomy" id="10090"/>
    <lineage>
        <taxon>Eukaryota</taxon>
        <taxon>Metazoa</taxon>
        <taxon>Chordata</taxon>
        <taxon>Craniata</taxon>
        <taxon>Vertebrata</taxon>
        <taxon>Euteleostomi</taxon>
        <taxon>Mammalia</taxon>
        <taxon>Eutheria</taxon>
        <taxon>Euarchontoglires</taxon>
        <taxon>Glires</taxon>
        <taxon>Rodentia</taxon>
        <taxon>Myomorpha</taxon>
        <taxon>Muroidea</taxon>
        <taxon>Muridae</taxon>
        <taxon>Murinae</taxon>
        <taxon>Mus</taxon>
        <taxon>Mus</taxon>
    </lineage>
</organism>
<reference key="1">
    <citation type="journal article" date="2009" name="PLoS Biol.">
        <title>Lineage-specific biology revealed by a finished genome assembly of the mouse.</title>
        <authorList>
            <person name="Church D.M."/>
            <person name="Goodstadt L."/>
            <person name="Hillier L.W."/>
            <person name="Zody M.C."/>
            <person name="Goldstein S."/>
            <person name="She X."/>
            <person name="Bult C.J."/>
            <person name="Agarwala R."/>
            <person name="Cherry J.L."/>
            <person name="DiCuccio M."/>
            <person name="Hlavina W."/>
            <person name="Kapustin Y."/>
            <person name="Meric P."/>
            <person name="Maglott D."/>
            <person name="Birtle Z."/>
            <person name="Marques A.C."/>
            <person name="Graves T."/>
            <person name="Zhou S."/>
            <person name="Teague B."/>
            <person name="Potamousis K."/>
            <person name="Churas C."/>
            <person name="Place M."/>
            <person name="Herschleb J."/>
            <person name="Runnheim R."/>
            <person name="Forrest D."/>
            <person name="Amos-Landgraf J."/>
            <person name="Schwartz D.C."/>
            <person name="Cheng Z."/>
            <person name="Lindblad-Toh K."/>
            <person name="Eichler E.E."/>
            <person name="Ponting C.P."/>
        </authorList>
    </citation>
    <scope>NUCLEOTIDE SEQUENCE [LARGE SCALE GENOMIC DNA]</scope>
    <source>
        <strain>C57BL/6J</strain>
    </source>
</reference>
<reference key="2">
    <citation type="journal article" date="2005" name="Science">
        <title>The transcriptional landscape of the mammalian genome.</title>
        <authorList>
            <person name="Carninci P."/>
            <person name="Kasukawa T."/>
            <person name="Katayama S."/>
            <person name="Gough J."/>
            <person name="Frith M.C."/>
            <person name="Maeda N."/>
            <person name="Oyama R."/>
            <person name="Ravasi T."/>
            <person name="Lenhard B."/>
            <person name="Wells C."/>
            <person name="Kodzius R."/>
            <person name="Shimokawa K."/>
            <person name="Bajic V.B."/>
            <person name="Brenner S.E."/>
            <person name="Batalov S."/>
            <person name="Forrest A.R."/>
            <person name="Zavolan M."/>
            <person name="Davis M.J."/>
            <person name="Wilming L.G."/>
            <person name="Aidinis V."/>
            <person name="Allen J.E."/>
            <person name="Ambesi-Impiombato A."/>
            <person name="Apweiler R."/>
            <person name="Aturaliya R.N."/>
            <person name="Bailey T.L."/>
            <person name="Bansal M."/>
            <person name="Baxter L."/>
            <person name="Beisel K.W."/>
            <person name="Bersano T."/>
            <person name="Bono H."/>
            <person name="Chalk A.M."/>
            <person name="Chiu K.P."/>
            <person name="Choudhary V."/>
            <person name="Christoffels A."/>
            <person name="Clutterbuck D.R."/>
            <person name="Crowe M.L."/>
            <person name="Dalla E."/>
            <person name="Dalrymple B.P."/>
            <person name="de Bono B."/>
            <person name="Della Gatta G."/>
            <person name="di Bernardo D."/>
            <person name="Down T."/>
            <person name="Engstrom P."/>
            <person name="Fagiolini M."/>
            <person name="Faulkner G."/>
            <person name="Fletcher C.F."/>
            <person name="Fukushima T."/>
            <person name="Furuno M."/>
            <person name="Futaki S."/>
            <person name="Gariboldi M."/>
            <person name="Georgii-Hemming P."/>
            <person name="Gingeras T.R."/>
            <person name="Gojobori T."/>
            <person name="Green R.E."/>
            <person name="Gustincich S."/>
            <person name="Harbers M."/>
            <person name="Hayashi Y."/>
            <person name="Hensch T.K."/>
            <person name="Hirokawa N."/>
            <person name="Hill D."/>
            <person name="Huminiecki L."/>
            <person name="Iacono M."/>
            <person name="Ikeo K."/>
            <person name="Iwama A."/>
            <person name="Ishikawa T."/>
            <person name="Jakt M."/>
            <person name="Kanapin A."/>
            <person name="Katoh M."/>
            <person name="Kawasawa Y."/>
            <person name="Kelso J."/>
            <person name="Kitamura H."/>
            <person name="Kitano H."/>
            <person name="Kollias G."/>
            <person name="Krishnan S.P."/>
            <person name="Kruger A."/>
            <person name="Kummerfeld S.K."/>
            <person name="Kurochkin I.V."/>
            <person name="Lareau L.F."/>
            <person name="Lazarevic D."/>
            <person name="Lipovich L."/>
            <person name="Liu J."/>
            <person name="Liuni S."/>
            <person name="McWilliam S."/>
            <person name="Madan Babu M."/>
            <person name="Madera M."/>
            <person name="Marchionni L."/>
            <person name="Matsuda H."/>
            <person name="Matsuzawa S."/>
            <person name="Miki H."/>
            <person name="Mignone F."/>
            <person name="Miyake S."/>
            <person name="Morris K."/>
            <person name="Mottagui-Tabar S."/>
            <person name="Mulder N."/>
            <person name="Nakano N."/>
            <person name="Nakauchi H."/>
            <person name="Ng P."/>
            <person name="Nilsson R."/>
            <person name="Nishiguchi S."/>
            <person name="Nishikawa S."/>
            <person name="Nori F."/>
            <person name="Ohara O."/>
            <person name="Okazaki Y."/>
            <person name="Orlando V."/>
            <person name="Pang K.C."/>
            <person name="Pavan W.J."/>
            <person name="Pavesi G."/>
            <person name="Pesole G."/>
            <person name="Petrovsky N."/>
            <person name="Piazza S."/>
            <person name="Reed J."/>
            <person name="Reid J.F."/>
            <person name="Ring B.Z."/>
            <person name="Ringwald M."/>
            <person name="Rost B."/>
            <person name="Ruan Y."/>
            <person name="Salzberg S.L."/>
            <person name="Sandelin A."/>
            <person name="Schneider C."/>
            <person name="Schoenbach C."/>
            <person name="Sekiguchi K."/>
            <person name="Semple C.A."/>
            <person name="Seno S."/>
            <person name="Sessa L."/>
            <person name="Sheng Y."/>
            <person name="Shibata Y."/>
            <person name="Shimada H."/>
            <person name="Shimada K."/>
            <person name="Silva D."/>
            <person name="Sinclair B."/>
            <person name="Sperling S."/>
            <person name="Stupka E."/>
            <person name="Sugiura K."/>
            <person name="Sultana R."/>
            <person name="Takenaka Y."/>
            <person name="Taki K."/>
            <person name="Tammoja K."/>
            <person name="Tan S.L."/>
            <person name="Tang S."/>
            <person name="Taylor M.S."/>
            <person name="Tegner J."/>
            <person name="Teichmann S.A."/>
            <person name="Ueda H.R."/>
            <person name="van Nimwegen E."/>
            <person name="Verardo R."/>
            <person name="Wei C.L."/>
            <person name="Yagi K."/>
            <person name="Yamanishi H."/>
            <person name="Zabarovsky E."/>
            <person name="Zhu S."/>
            <person name="Zimmer A."/>
            <person name="Hide W."/>
            <person name="Bult C."/>
            <person name="Grimmond S.M."/>
            <person name="Teasdale R.D."/>
            <person name="Liu E.T."/>
            <person name="Brusic V."/>
            <person name="Quackenbush J."/>
            <person name="Wahlestedt C."/>
            <person name="Mattick J.S."/>
            <person name="Hume D.A."/>
            <person name="Kai C."/>
            <person name="Sasaki D."/>
            <person name="Tomaru Y."/>
            <person name="Fukuda S."/>
            <person name="Kanamori-Katayama M."/>
            <person name="Suzuki M."/>
            <person name="Aoki J."/>
            <person name="Arakawa T."/>
            <person name="Iida J."/>
            <person name="Imamura K."/>
            <person name="Itoh M."/>
            <person name="Kato T."/>
            <person name="Kawaji H."/>
            <person name="Kawagashira N."/>
            <person name="Kawashima T."/>
            <person name="Kojima M."/>
            <person name="Kondo S."/>
            <person name="Konno H."/>
            <person name="Nakano K."/>
            <person name="Ninomiya N."/>
            <person name="Nishio T."/>
            <person name="Okada M."/>
            <person name="Plessy C."/>
            <person name="Shibata K."/>
            <person name="Shiraki T."/>
            <person name="Suzuki S."/>
            <person name="Tagami M."/>
            <person name="Waki K."/>
            <person name="Watahiki A."/>
            <person name="Okamura-Oho Y."/>
            <person name="Suzuki H."/>
            <person name="Kawai J."/>
            <person name="Hayashizaki Y."/>
        </authorList>
    </citation>
    <scope>NUCLEOTIDE SEQUENCE [LARGE SCALE MRNA] OF 1-657 AND 1662-1958</scope>
    <source>
        <strain>C57BL/6J</strain>
        <tissue>Embryonic head</tissue>
        <tissue>Hippocampus</tissue>
    </source>
</reference>
<reference key="3">
    <citation type="journal article" date="2004" name="Genome Res.">
        <title>The status, quality, and expansion of the NIH full-length cDNA project: the Mammalian Gene Collection (MGC).</title>
        <authorList>
            <consortium name="The MGC Project Team"/>
        </authorList>
    </citation>
    <scope>NUCLEOTIDE SEQUENCE [LARGE SCALE MRNA] OF 1335-1958</scope>
    <source>
        <strain>C57BL/6J</strain>
        <tissue>Retina</tissue>
    </source>
</reference>
<feature type="chain" id="PRO_0000284398" description="Echinoderm microtubule-associated protein-like 6">
    <location>
        <begin position="1"/>
        <end position="1958"/>
    </location>
</feature>
<feature type="repeat" description="WD 1">
    <location>
        <begin position="59"/>
        <end position="100"/>
    </location>
</feature>
<feature type="repeat" description="WD 2">
    <location>
        <begin position="104"/>
        <end position="145"/>
    </location>
</feature>
<feature type="repeat" description="WD 3">
    <location>
        <begin position="148"/>
        <end position="187"/>
    </location>
</feature>
<feature type="repeat" description="WD 4">
    <location>
        <begin position="195"/>
        <end position="233"/>
    </location>
</feature>
<feature type="repeat" description="WD 5">
    <location>
        <begin position="235"/>
        <end position="273"/>
    </location>
</feature>
<feature type="repeat" description="WD 6">
    <location>
        <begin position="280"/>
        <end position="321"/>
    </location>
</feature>
<feature type="repeat" description="WD 7">
    <location>
        <begin position="323"/>
        <end position="362"/>
    </location>
</feature>
<feature type="repeat" description="WD 8">
    <location>
        <begin position="364"/>
        <end position="403"/>
    </location>
</feature>
<feature type="repeat" description="WD 9">
    <location>
        <begin position="406"/>
        <end position="445"/>
    </location>
</feature>
<feature type="repeat" description="WD 10">
    <location>
        <begin position="561"/>
        <end position="601"/>
    </location>
</feature>
<feature type="repeat" description="WD 11">
    <location>
        <begin position="725"/>
        <end position="766"/>
    </location>
</feature>
<feature type="repeat" description="WD 12">
    <location>
        <begin position="770"/>
        <end position="811"/>
    </location>
</feature>
<feature type="repeat" description="WD 13">
    <location>
        <begin position="814"/>
        <end position="853"/>
    </location>
</feature>
<feature type="repeat" description="WD 14">
    <location>
        <begin position="861"/>
        <end position="900"/>
    </location>
</feature>
<feature type="repeat" description="WD 15">
    <location>
        <begin position="901"/>
        <end position="940"/>
    </location>
</feature>
<feature type="repeat" description="WD 16">
    <location>
        <begin position="996"/>
        <end position="1035"/>
    </location>
</feature>
<feature type="repeat" description="WD 17">
    <location>
        <begin position="1038"/>
        <end position="1077"/>
    </location>
</feature>
<feature type="repeat" description="WD 18">
    <location>
        <begin position="1080"/>
        <end position="1120"/>
    </location>
</feature>
<feature type="repeat" description="WD 19">
    <location>
        <begin position="1191"/>
        <end position="1230"/>
    </location>
</feature>
<feature type="repeat" description="WD 20">
    <location>
        <begin position="1236"/>
        <end position="1276"/>
    </location>
</feature>
<feature type="repeat" description="WD 21">
    <location>
        <begin position="1412"/>
        <end position="1456"/>
    </location>
</feature>
<feature type="repeat" description="WD 22">
    <location>
        <begin position="1460"/>
        <end position="1501"/>
    </location>
</feature>
<feature type="repeat" description="WD 23">
    <location>
        <begin position="1504"/>
        <end position="1543"/>
    </location>
</feature>
<feature type="repeat" description="WD 24">
    <location>
        <begin position="1553"/>
        <end position="1591"/>
    </location>
</feature>
<feature type="repeat" description="WD 25">
    <location>
        <begin position="1593"/>
        <end position="1638"/>
    </location>
</feature>
<feature type="repeat" description="WD 26">
    <location>
        <begin position="1685"/>
        <end position="1724"/>
    </location>
</feature>
<feature type="repeat" description="WD 27">
    <location>
        <begin position="1726"/>
        <end position="1767"/>
    </location>
</feature>
<feature type="repeat" description="WD 28">
    <location>
        <begin position="1768"/>
        <end position="1807"/>
    </location>
</feature>
<feature type="repeat" description="WD 29">
    <location>
        <begin position="1880"/>
        <end position="1919"/>
    </location>
</feature>
<feature type="repeat" description="WD 30">
    <location>
        <begin position="1925"/>
        <end position="1958"/>
    </location>
</feature>
<feature type="region of interest" description="Disordered" evidence="2">
    <location>
        <begin position="604"/>
        <end position="627"/>
    </location>
</feature>
<feature type="region of interest" description="Disordered" evidence="2">
    <location>
        <begin position="1322"/>
        <end position="1352"/>
    </location>
</feature>
<feature type="compositionally biased region" description="Acidic residues" evidence="2">
    <location>
        <begin position="615"/>
        <end position="627"/>
    </location>
</feature>
<feature type="compositionally biased region" description="Basic and acidic residues" evidence="2">
    <location>
        <begin position="1322"/>
        <end position="1337"/>
    </location>
</feature>
<feature type="sequence conflict" description="In Ref. 2; BAC38214." evidence="3" ref="2">
    <original>V</original>
    <variation>M</variation>
    <location>
        <position position="1890"/>
    </location>
</feature>
<proteinExistence type="evidence at transcript level"/>
<evidence type="ECO:0000250" key="1"/>
<evidence type="ECO:0000256" key="2">
    <source>
        <dbReference type="SAM" id="MobiDB-lite"/>
    </source>
</evidence>
<evidence type="ECO:0000305" key="3"/>
<accession>Q5SQM0</accession>
<accession>Q8C4R3</accession>
<accession>Q8C7L3</accession>
<accession>Q8R1E3</accession>
<protein>
    <recommendedName>
        <fullName>Echinoderm microtubule-associated protein-like 6</fullName>
        <shortName>EMAP-6</shortName>
    </recommendedName>
    <alternativeName>
        <fullName>Echinoderm microtubule-associated protein-like 5-like</fullName>
    </alternativeName>
</protein>
<keyword id="KW-0963">Cytoplasm</keyword>
<keyword id="KW-0206">Cytoskeleton</keyword>
<keyword id="KW-0493">Microtubule</keyword>
<keyword id="KW-1185">Reference proteome</keyword>
<keyword id="KW-0677">Repeat</keyword>
<keyword id="KW-0853">WD repeat</keyword>
<comment type="function">
    <text evidence="1">May modify the assembly dynamics of microtubules, such that microtubules are slightly longer, but more dynamic.</text>
</comment>
<comment type="subcellular location">
    <subcellularLocation>
        <location evidence="3">Cytoplasm</location>
        <location evidence="3">Cytoskeleton</location>
    </subcellularLocation>
</comment>
<comment type="similarity">
    <text evidence="3">Belongs to the WD repeat EMAP family.</text>
</comment>
<comment type="sequence caution" evidence="3">
    <conflict type="erroneous initiation">
        <sequence resource="EMBL-CDS" id="AAH24726"/>
    </conflict>
</comment>
<comment type="sequence caution" evidence="3">
    <conflict type="erroneous initiation">
        <sequence resource="EMBL-CDS" id="BAC38214"/>
    </conflict>
</comment>
<gene>
    <name type="primary">Eml6</name>
    <name type="synonym">Eml5l</name>
</gene>